<protein>
    <recommendedName>
        <fullName evidence="1">tRNA-specific 2-thiouridylase MnmA</fullName>
        <ecNumber evidence="1">2.8.1.13</ecNumber>
    </recommendedName>
</protein>
<gene>
    <name evidence="1" type="primary">mnmA</name>
    <name type="ordered locus">PGN_0366</name>
</gene>
<accession>B2RHP0</accession>
<name>MNMA_PORG3</name>
<keyword id="KW-0067">ATP-binding</keyword>
<keyword id="KW-0963">Cytoplasm</keyword>
<keyword id="KW-1015">Disulfide bond</keyword>
<keyword id="KW-0547">Nucleotide-binding</keyword>
<keyword id="KW-0694">RNA-binding</keyword>
<keyword id="KW-0808">Transferase</keyword>
<keyword id="KW-0819">tRNA processing</keyword>
<keyword id="KW-0820">tRNA-binding</keyword>
<evidence type="ECO:0000255" key="1">
    <source>
        <dbReference type="HAMAP-Rule" id="MF_00144"/>
    </source>
</evidence>
<organism>
    <name type="scientific">Porphyromonas gingivalis (strain ATCC 33277 / DSM 20709 / CIP 103683 / JCM 12257 / NCTC 11834 / 2561)</name>
    <dbReference type="NCBI Taxonomy" id="431947"/>
    <lineage>
        <taxon>Bacteria</taxon>
        <taxon>Pseudomonadati</taxon>
        <taxon>Bacteroidota</taxon>
        <taxon>Bacteroidia</taxon>
        <taxon>Bacteroidales</taxon>
        <taxon>Porphyromonadaceae</taxon>
        <taxon>Porphyromonas</taxon>
    </lineage>
</organism>
<sequence length="361" mass="41194">MDVAALVSGGVDSSVVVHRLCEEGYKPAIFYIRIGMEDEDGYIDCPAEEDIELTTLIARRYGCPFEVVDLHKEYWERVVSYTVETVRRGLTPNPDMMCNKLIKFGCFEERWGYQFDRIATGHYATTDLLNGKTYLSTAKDPVKDQTDFLAQINFAQISKLMFPIGHLLKSEVRAIANAAGLPSAKRKDSQGICFLGKIDYNDFIERYLGKKEGRIIELETGKVIGRHQGYWFHTIGQRKGLGLSGGPWFVVKKDIKRNIILVSRGYDPDTQYGKTIEMETFDFITEDAYEAGYWNREDATPVTFKIRHTPEFTRGLLYKGEKGYRLESEERIQGIAPGQYCVIYDEDHHLCYGSGMITKGR</sequence>
<proteinExistence type="inferred from homology"/>
<comment type="function">
    <text evidence="1">Catalyzes the 2-thiolation of uridine at the wobble position (U34) of tRNA, leading to the formation of s(2)U34.</text>
</comment>
<comment type="catalytic activity">
    <reaction evidence="1">
        <text>S-sulfanyl-L-cysteinyl-[protein] + uridine(34) in tRNA + AH2 + ATP = 2-thiouridine(34) in tRNA + L-cysteinyl-[protein] + A + AMP + diphosphate + H(+)</text>
        <dbReference type="Rhea" id="RHEA:47032"/>
        <dbReference type="Rhea" id="RHEA-COMP:10131"/>
        <dbReference type="Rhea" id="RHEA-COMP:11726"/>
        <dbReference type="Rhea" id="RHEA-COMP:11727"/>
        <dbReference type="Rhea" id="RHEA-COMP:11728"/>
        <dbReference type="ChEBI" id="CHEBI:13193"/>
        <dbReference type="ChEBI" id="CHEBI:15378"/>
        <dbReference type="ChEBI" id="CHEBI:17499"/>
        <dbReference type="ChEBI" id="CHEBI:29950"/>
        <dbReference type="ChEBI" id="CHEBI:30616"/>
        <dbReference type="ChEBI" id="CHEBI:33019"/>
        <dbReference type="ChEBI" id="CHEBI:61963"/>
        <dbReference type="ChEBI" id="CHEBI:65315"/>
        <dbReference type="ChEBI" id="CHEBI:87170"/>
        <dbReference type="ChEBI" id="CHEBI:456215"/>
        <dbReference type="EC" id="2.8.1.13"/>
    </reaction>
</comment>
<comment type="subcellular location">
    <subcellularLocation>
        <location evidence="1">Cytoplasm</location>
    </subcellularLocation>
</comment>
<comment type="similarity">
    <text evidence="1">Belongs to the MnmA/TRMU family.</text>
</comment>
<dbReference type="EC" id="2.8.1.13" evidence="1"/>
<dbReference type="EMBL" id="AP009380">
    <property type="protein sequence ID" value="BAG32885.1"/>
    <property type="molecule type" value="Genomic_DNA"/>
</dbReference>
<dbReference type="RefSeq" id="WP_012457454.1">
    <property type="nucleotide sequence ID" value="NC_010729.1"/>
</dbReference>
<dbReference type="SMR" id="B2RHP0"/>
<dbReference type="GeneID" id="29255606"/>
<dbReference type="KEGG" id="pgn:PGN_0366"/>
<dbReference type="eggNOG" id="COG0482">
    <property type="taxonomic scope" value="Bacteria"/>
</dbReference>
<dbReference type="HOGENOM" id="CLU_035188_1_0_10"/>
<dbReference type="OrthoDB" id="9800696at2"/>
<dbReference type="BioCyc" id="PGIN431947:G1G2V-402-MONOMER"/>
<dbReference type="Proteomes" id="UP000008842">
    <property type="component" value="Chromosome"/>
</dbReference>
<dbReference type="GO" id="GO:0005737">
    <property type="term" value="C:cytoplasm"/>
    <property type="evidence" value="ECO:0007669"/>
    <property type="project" value="UniProtKB-SubCell"/>
</dbReference>
<dbReference type="GO" id="GO:0005524">
    <property type="term" value="F:ATP binding"/>
    <property type="evidence" value="ECO:0007669"/>
    <property type="project" value="UniProtKB-KW"/>
</dbReference>
<dbReference type="GO" id="GO:0000049">
    <property type="term" value="F:tRNA binding"/>
    <property type="evidence" value="ECO:0007669"/>
    <property type="project" value="UniProtKB-KW"/>
</dbReference>
<dbReference type="GO" id="GO:0103016">
    <property type="term" value="F:tRNA-uridine 2-sulfurtransferase activity"/>
    <property type="evidence" value="ECO:0007669"/>
    <property type="project" value="UniProtKB-EC"/>
</dbReference>
<dbReference type="GO" id="GO:0006400">
    <property type="term" value="P:tRNA modification"/>
    <property type="evidence" value="ECO:0007669"/>
    <property type="project" value="UniProtKB-UniRule"/>
</dbReference>
<dbReference type="CDD" id="cd01998">
    <property type="entry name" value="MnmA_TRMU-like"/>
    <property type="match status" value="1"/>
</dbReference>
<dbReference type="FunFam" id="2.30.30.280:FF:000001">
    <property type="entry name" value="tRNA-specific 2-thiouridylase MnmA"/>
    <property type="match status" value="1"/>
</dbReference>
<dbReference type="Gene3D" id="2.30.30.280">
    <property type="entry name" value="Adenine nucleotide alpha hydrolases-like domains"/>
    <property type="match status" value="1"/>
</dbReference>
<dbReference type="Gene3D" id="3.40.50.620">
    <property type="entry name" value="HUPs"/>
    <property type="match status" value="1"/>
</dbReference>
<dbReference type="Gene3D" id="2.40.30.10">
    <property type="entry name" value="Translation factors"/>
    <property type="match status" value="1"/>
</dbReference>
<dbReference type="HAMAP" id="MF_00144">
    <property type="entry name" value="tRNA_thiouridyl_MnmA"/>
    <property type="match status" value="1"/>
</dbReference>
<dbReference type="InterPro" id="IPR004506">
    <property type="entry name" value="MnmA-like"/>
</dbReference>
<dbReference type="InterPro" id="IPR046885">
    <property type="entry name" value="MnmA-like_C"/>
</dbReference>
<dbReference type="InterPro" id="IPR046884">
    <property type="entry name" value="MnmA-like_central"/>
</dbReference>
<dbReference type="InterPro" id="IPR023382">
    <property type="entry name" value="MnmA-like_central_sf"/>
</dbReference>
<dbReference type="InterPro" id="IPR014729">
    <property type="entry name" value="Rossmann-like_a/b/a_fold"/>
</dbReference>
<dbReference type="InterPro" id="IPR051305">
    <property type="entry name" value="tRNA_2-thiouridylase_MnmA"/>
</dbReference>
<dbReference type="NCBIfam" id="NF001138">
    <property type="entry name" value="PRK00143.1"/>
    <property type="match status" value="1"/>
</dbReference>
<dbReference type="NCBIfam" id="TIGR00420">
    <property type="entry name" value="trmU"/>
    <property type="match status" value="1"/>
</dbReference>
<dbReference type="PANTHER" id="PTHR43052">
    <property type="match status" value="1"/>
</dbReference>
<dbReference type="PANTHER" id="PTHR43052:SF1">
    <property type="entry name" value="TRNA-5-TAURINOMETHYLURIDINE 2-SULFURTRANSFERASE"/>
    <property type="match status" value="1"/>
</dbReference>
<dbReference type="Pfam" id="PF03054">
    <property type="entry name" value="tRNA_Me_trans"/>
    <property type="match status" value="1"/>
</dbReference>
<dbReference type="Pfam" id="PF20258">
    <property type="entry name" value="tRNA_Me_trans_C"/>
    <property type="match status" value="1"/>
</dbReference>
<dbReference type="Pfam" id="PF20259">
    <property type="entry name" value="tRNA_Me_trans_M"/>
    <property type="match status" value="1"/>
</dbReference>
<dbReference type="SUPFAM" id="SSF52402">
    <property type="entry name" value="Adenine nucleotide alpha hydrolases-like"/>
    <property type="match status" value="1"/>
</dbReference>
<reference key="1">
    <citation type="journal article" date="2008" name="DNA Res.">
        <title>Determination of the genome sequence of Porphyromonas gingivalis strain ATCC 33277 and genomic comparison with strain W83 revealed extensive genome rearrangements in P. gingivalis.</title>
        <authorList>
            <person name="Naito M."/>
            <person name="Hirakawa H."/>
            <person name="Yamashita A."/>
            <person name="Ohara N."/>
            <person name="Shoji M."/>
            <person name="Yukitake H."/>
            <person name="Nakayama K."/>
            <person name="Toh H."/>
            <person name="Yoshimura F."/>
            <person name="Kuhara S."/>
            <person name="Hattori M."/>
            <person name="Hayashi T."/>
            <person name="Nakayama K."/>
        </authorList>
    </citation>
    <scope>NUCLEOTIDE SEQUENCE [LARGE SCALE GENOMIC DNA]</scope>
    <source>
        <strain>ATCC 33277 / DSM 20709 / CIP 103683 / JCM 12257 / NCTC 11834 / 2561</strain>
    </source>
</reference>
<feature type="chain" id="PRO_1000096300" description="tRNA-specific 2-thiouridylase MnmA">
    <location>
        <begin position="1"/>
        <end position="361"/>
    </location>
</feature>
<feature type="region of interest" description="Interaction with target base in tRNA" evidence="1">
    <location>
        <begin position="93"/>
        <end position="95"/>
    </location>
</feature>
<feature type="region of interest" description="Interaction with tRNA" evidence="1">
    <location>
        <begin position="143"/>
        <end position="145"/>
    </location>
</feature>
<feature type="active site" description="Nucleophile" evidence="1">
    <location>
        <position position="98"/>
    </location>
</feature>
<feature type="active site" description="Cysteine persulfide intermediate" evidence="1">
    <location>
        <position position="193"/>
    </location>
</feature>
<feature type="binding site" evidence="1">
    <location>
        <begin position="6"/>
        <end position="13"/>
    </location>
    <ligand>
        <name>ATP</name>
        <dbReference type="ChEBI" id="CHEBI:30616"/>
    </ligand>
</feature>
<feature type="binding site" evidence="1">
    <location>
        <position position="32"/>
    </location>
    <ligand>
        <name>ATP</name>
        <dbReference type="ChEBI" id="CHEBI:30616"/>
    </ligand>
</feature>
<feature type="binding site" evidence="1">
    <location>
        <position position="121"/>
    </location>
    <ligand>
        <name>ATP</name>
        <dbReference type="ChEBI" id="CHEBI:30616"/>
    </ligand>
</feature>
<feature type="site" description="Interaction with tRNA" evidence="1">
    <location>
        <position position="122"/>
    </location>
</feature>
<feature type="site" description="Interaction with tRNA" evidence="1">
    <location>
        <position position="339"/>
    </location>
</feature>
<feature type="disulfide bond" description="Alternate" evidence="1">
    <location>
        <begin position="98"/>
        <end position="193"/>
    </location>
</feature>